<evidence type="ECO:0000250" key="1">
    <source>
        <dbReference type="UniProtKB" id="Q12051"/>
    </source>
</evidence>
<evidence type="ECO:0000269" key="2">
    <source>
    </source>
</evidence>
<evidence type="ECO:0000269" key="3">
    <source>
    </source>
</evidence>
<evidence type="ECO:0000269" key="4">
    <source>
    </source>
</evidence>
<evidence type="ECO:0000303" key="5">
    <source>
    </source>
</evidence>
<evidence type="ECO:0000305" key="6"/>
<evidence type="ECO:0000305" key="7">
    <source>
    </source>
</evidence>
<evidence type="ECO:0000312" key="8">
    <source>
        <dbReference type="EMBL" id="CCP43739.1"/>
    </source>
</evidence>
<comment type="function">
    <text evidence="2 3 4">Catalyzes the addition of isopentenyl diphosphate (IPP) onto dimethylallyl diphosphate (DMAPP) to form geranyl pyrophosphate (GPP) (PubMed:21237161, PubMed:30301210). Is probably involved in the biosynthesis of decaprenyl diphosphate, which is required for mycobacterial cell wall synthesis (PubMed:21237161). Could be required for host endothelial-cell invasion and/or intracellular survival (PubMed:16586367).</text>
</comment>
<comment type="catalytic activity">
    <reaction evidence="3 4">
        <text>isopentenyl diphosphate + dimethylallyl diphosphate = (2E)-geranyl diphosphate + diphosphate</text>
        <dbReference type="Rhea" id="RHEA:22408"/>
        <dbReference type="ChEBI" id="CHEBI:33019"/>
        <dbReference type="ChEBI" id="CHEBI:57623"/>
        <dbReference type="ChEBI" id="CHEBI:58057"/>
        <dbReference type="ChEBI" id="CHEBI:128769"/>
        <dbReference type="EC" id="2.5.1.1"/>
    </reaction>
    <physiologicalReaction direction="left-to-right" evidence="3 4">
        <dbReference type="Rhea" id="RHEA:22409"/>
    </physiologicalReaction>
</comment>
<comment type="cofactor">
    <cofactor evidence="1">
        <name>Mg(2+)</name>
        <dbReference type="ChEBI" id="CHEBI:18420"/>
    </cofactor>
    <text evidence="1">Binds 2 Mg(2+) ions per subunit.</text>
</comment>
<comment type="pathway">
    <text evidence="3">Isoprenoid biosynthesis; geranyl diphosphate biosynthesis; geranyl diphosphate from dimethylallyl diphosphate and isopentenyl diphosphate: step 1/1.</text>
</comment>
<comment type="induction">
    <text evidence="2">Highly up-regulated during the early stages of invasion of the human blood-brain barrier.</text>
</comment>
<comment type="domain">
    <text evidence="7">Contains two aspartate-rich motifs, designated as FARM (the first aspartate-rich motif) and SARM (the second aspartate-rich motif). Rv0989c contains arginine in place of the second Asp in its FARM and first Asp in its SARM. The primary role of the FARM and SARM is the chelation of the divalent magnesium ion cofactors that assist substrate binding and catalysis, but it may also play a role in determining product chain length.</text>
</comment>
<comment type="disruption phenotype">
    <text evidence="2">Invasion of the infant human brain microvascular endothelial-cell monolayer is significantly decreased in transposon mutant.</text>
</comment>
<comment type="similarity">
    <text evidence="6">Belongs to the FPP/GGPP synthase family.</text>
</comment>
<gene>
    <name evidence="8" type="primary">grcC2</name>
    <name evidence="8" type="ordered locus">Rv0989c</name>
</gene>
<organism>
    <name type="scientific">Mycobacterium tuberculosis (strain ATCC 25618 / H37Rv)</name>
    <dbReference type="NCBI Taxonomy" id="83332"/>
    <lineage>
        <taxon>Bacteria</taxon>
        <taxon>Bacillati</taxon>
        <taxon>Actinomycetota</taxon>
        <taxon>Actinomycetes</taxon>
        <taxon>Mycobacteriales</taxon>
        <taxon>Mycobacteriaceae</taxon>
        <taxon>Mycobacterium</taxon>
        <taxon>Mycobacterium tuberculosis complex</taxon>
    </lineage>
</organism>
<keyword id="KW-0444">Lipid biosynthesis</keyword>
<keyword id="KW-0443">Lipid metabolism</keyword>
<keyword id="KW-0460">Magnesium</keyword>
<keyword id="KW-0479">Metal-binding</keyword>
<keyword id="KW-1185">Reference proteome</keyword>
<keyword id="KW-0808">Transferase</keyword>
<dbReference type="EC" id="2.5.1.1" evidence="3 4"/>
<dbReference type="EMBL" id="AL123456">
    <property type="protein sequence ID" value="CCP43739.1"/>
    <property type="molecule type" value="Genomic_DNA"/>
</dbReference>
<dbReference type="RefSeq" id="NP_215504.1">
    <property type="nucleotide sequence ID" value="NC_000962.3"/>
</dbReference>
<dbReference type="SMR" id="O05572"/>
<dbReference type="FunCoup" id="O05572">
    <property type="interactions" value="271"/>
</dbReference>
<dbReference type="STRING" id="83332.Rv0989c"/>
<dbReference type="PaxDb" id="83332-Rv0989c"/>
<dbReference type="DNASU" id="885355"/>
<dbReference type="GeneID" id="885355"/>
<dbReference type="KEGG" id="mtu:Rv0989c"/>
<dbReference type="KEGG" id="mtv:RVBD_0989c"/>
<dbReference type="PATRIC" id="fig|83332.111.peg.1097"/>
<dbReference type="TubercuList" id="Rv0989c"/>
<dbReference type="eggNOG" id="COG0142">
    <property type="taxonomic scope" value="Bacteria"/>
</dbReference>
<dbReference type="InParanoid" id="O05572"/>
<dbReference type="OrthoDB" id="4497239at2"/>
<dbReference type="PhylomeDB" id="O05572"/>
<dbReference type="UniPathway" id="UPA00259">
    <property type="reaction ID" value="UER00368"/>
</dbReference>
<dbReference type="Proteomes" id="UP000001584">
    <property type="component" value="Chromosome"/>
</dbReference>
<dbReference type="GO" id="GO:0004161">
    <property type="term" value="F:dimethylallyltranstransferase activity"/>
    <property type="evidence" value="ECO:0007669"/>
    <property type="project" value="UniProtKB-EC"/>
</dbReference>
<dbReference type="GO" id="GO:0046872">
    <property type="term" value="F:metal ion binding"/>
    <property type="evidence" value="ECO:0007669"/>
    <property type="project" value="UniProtKB-KW"/>
</dbReference>
<dbReference type="GO" id="GO:0004659">
    <property type="term" value="F:prenyltransferase activity"/>
    <property type="evidence" value="ECO:0000318"/>
    <property type="project" value="GO_Central"/>
</dbReference>
<dbReference type="GO" id="GO:0033384">
    <property type="term" value="P:geranyl diphosphate biosynthetic process"/>
    <property type="evidence" value="ECO:0007669"/>
    <property type="project" value="UniProtKB-UniPathway"/>
</dbReference>
<dbReference type="GO" id="GO:0008299">
    <property type="term" value="P:isoprenoid biosynthetic process"/>
    <property type="evidence" value="ECO:0000318"/>
    <property type="project" value="GO_Central"/>
</dbReference>
<dbReference type="CDD" id="cd00867">
    <property type="entry name" value="Trans_IPPS"/>
    <property type="match status" value="1"/>
</dbReference>
<dbReference type="Gene3D" id="1.10.600.10">
    <property type="entry name" value="Farnesyl Diphosphate Synthase"/>
    <property type="match status" value="1"/>
</dbReference>
<dbReference type="InterPro" id="IPR008949">
    <property type="entry name" value="Isoprenoid_synthase_dom_sf"/>
</dbReference>
<dbReference type="InterPro" id="IPR000092">
    <property type="entry name" value="Polyprenyl_synt"/>
</dbReference>
<dbReference type="PANTHER" id="PTHR12001:SF69">
    <property type="entry name" value="ALL TRANS-POLYPRENYL-DIPHOSPHATE SYNTHASE PDSS1"/>
    <property type="match status" value="1"/>
</dbReference>
<dbReference type="PANTHER" id="PTHR12001">
    <property type="entry name" value="GERANYLGERANYL PYROPHOSPHATE SYNTHASE"/>
    <property type="match status" value="1"/>
</dbReference>
<dbReference type="Pfam" id="PF00348">
    <property type="entry name" value="polyprenyl_synt"/>
    <property type="match status" value="1"/>
</dbReference>
<dbReference type="SUPFAM" id="SSF48576">
    <property type="entry name" value="Terpenoid synthases"/>
    <property type="match status" value="1"/>
</dbReference>
<feature type="chain" id="PRO_0000451294" description="Dimethylallyltranstransferase">
    <location>
        <begin position="1"/>
        <end position="325"/>
    </location>
</feature>
<feature type="short sequence motif" description="DDXXD motif" evidence="7">
    <location>
        <begin position="91"/>
        <end position="95"/>
    </location>
</feature>
<feature type="short sequence motif" description="DDXXD motif" evidence="7">
    <location>
        <begin position="217"/>
        <end position="221"/>
    </location>
</feature>
<feature type="binding site" evidence="1">
    <location>
        <position position="54"/>
    </location>
    <ligand>
        <name>isopentenyl diphosphate</name>
        <dbReference type="ChEBI" id="CHEBI:128769"/>
    </ligand>
</feature>
<feature type="binding site" evidence="1">
    <location>
        <position position="84"/>
    </location>
    <ligand>
        <name>isopentenyl diphosphate</name>
        <dbReference type="ChEBI" id="CHEBI:128769"/>
    </ligand>
</feature>
<feature type="binding site" evidence="1">
    <location>
        <position position="91"/>
    </location>
    <ligand>
        <name>Mg(2+)</name>
        <dbReference type="ChEBI" id="CHEBI:18420"/>
        <label>1</label>
    </ligand>
</feature>
<feature type="binding site" evidence="1">
    <location>
        <position position="91"/>
    </location>
    <ligand>
        <name>Mg(2+)</name>
        <dbReference type="ChEBI" id="CHEBI:18420"/>
        <label>2</label>
    </ligand>
</feature>
<feature type="binding site" evidence="1">
    <location>
        <position position="95"/>
    </location>
    <ligand>
        <name>Mg(2+)</name>
        <dbReference type="ChEBI" id="CHEBI:18420"/>
        <label>1</label>
    </ligand>
</feature>
<feature type="binding site" evidence="1">
    <location>
        <position position="95"/>
    </location>
    <ligand>
        <name>Mg(2+)</name>
        <dbReference type="ChEBI" id="CHEBI:18420"/>
        <label>2</label>
    </ligand>
</feature>
<feature type="binding site" evidence="1">
    <location>
        <position position="101"/>
    </location>
    <ligand>
        <name>isopentenyl diphosphate</name>
        <dbReference type="ChEBI" id="CHEBI:128769"/>
    </ligand>
</feature>
<feature type="site" description="Important for determining product chain length" evidence="7">
    <location>
        <position position="92"/>
    </location>
</feature>
<feature type="site" description="Important for determining product chain length" evidence="7">
    <location>
        <position position="217"/>
    </location>
</feature>
<feature type="mutagenesis site" description="Leads to the production of longer chain product, specifically (E,E)-farnesyl diphosphate (FPP), in addition to GPP." evidence="4">
    <original>R</original>
    <variation>D</variation>
    <location>
        <position position="92"/>
    </location>
</feature>
<feature type="mutagenesis site" description="Leads to the production of longer chain product, specifically (E,E)-farnesyl diphosphate (FPP), in addition to GPP." evidence="4">
    <original>R</original>
    <variation>D</variation>
    <location>
        <position position="217"/>
    </location>
</feature>
<name>GPPS_MYCTU</name>
<reference key="1">
    <citation type="journal article" date="1998" name="Nature">
        <title>Deciphering the biology of Mycobacterium tuberculosis from the complete genome sequence.</title>
        <authorList>
            <person name="Cole S.T."/>
            <person name="Brosch R."/>
            <person name="Parkhill J."/>
            <person name="Garnier T."/>
            <person name="Churcher C.M."/>
            <person name="Harris D.E."/>
            <person name="Gordon S.V."/>
            <person name="Eiglmeier K."/>
            <person name="Gas S."/>
            <person name="Barry C.E. III"/>
            <person name="Tekaia F."/>
            <person name="Badcock K."/>
            <person name="Basham D."/>
            <person name="Brown D."/>
            <person name="Chillingworth T."/>
            <person name="Connor R."/>
            <person name="Davies R.M."/>
            <person name="Devlin K."/>
            <person name="Feltwell T."/>
            <person name="Gentles S."/>
            <person name="Hamlin N."/>
            <person name="Holroyd S."/>
            <person name="Hornsby T."/>
            <person name="Jagels K."/>
            <person name="Krogh A."/>
            <person name="McLean J."/>
            <person name="Moule S."/>
            <person name="Murphy L.D."/>
            <person name="Oliver S."/>
            <person name="Osborne J."/>
            <person name="Quail M.A."/>
            <person name="Rajandream M.A."/>
            <person name="Rogers J."/>
            <person name="Rutter S."/>
            <person name="Seeger K."/>
            <person name="Skelton S."/>
            <person name="Squares S."/>
            <person name="Squares R."/>
            <person name="Sulston J.E."/>
            <person name="Taylor K."/>
            <person name="Whitehead S."/>
            <person name="Barrell B.G."/>
        </authorList>
    </citation>
    <scope>NUCLEOTIDE SEQUENCE [LARGE SCALE GENOMIC DNA]</scope>
    <source>
        <strain>ATCC 25618 / H37Rv</strain>
    </source>
</reference>
<reference key="2">
    <citation type="journal article" date="2006" name="J. Infect. Dis.">
        <title>Mycobacterium tuberculosis invasion and traversal across an in vitro human blood-brain barrier as a pathogenic mechanism for central nervous system tuberculosis.</title>
        <authorList>
            <person name="Jain S.K."/>
            <person name="Paul-Satyaseela M."/>
            <person name="Lamichhane G."/>
            <person name="Kim K.S."/>
            <person name="Bishai W.R."/>
        </authorList>
    </citation>
    <scope>FUNCTION</scope>
    <scope>INDUCTION</scope>
    <scope>DISRUPTION PHENOTYPE</scope>
    <source>
        <strain>ATCC 25618 / H37Rv</strain>
    </source>
</reference>
<reference key="3">
    <citation type="journal article" date="2011" name="FEBS Lett.">
        <title>Rv0989c encodes a novel (E)-geranyl diphosphate synthase facilitating decaprenyl diphosphate biosynthesis in Mycobacterium tuberculosis.</title>
        <authorList>
            <person name="Mann F.M."/>
            <person name="Thomas J.A."/>
            <person name="Peters R.J."/>
        </authorList>
    </citation>
    <scope>FUNCTION</scope>
    <scope>CATALYTIC ACTIVITY</scope>
    <scope>PATHWAY</scope>
</reference>
<reference key="4">
    <citation type="journal article" date="2011" name="Mol. Cell. Proteomics">
        <title>Proteogenomic analysis of Mycobacterium tuberculosis by high resolution mass spectrometry.</title>
        <authorList>
            <person name="Kelkar D.S."/>
            <person name="Kumar D."/>
            <person name="Kumar P."/>
            <person name="Balakrishnan L."/>
            <person name="Muthusamy B."/>
            <person name="Yadav A.K."/>
            <person name="Shrivastava P."/>
            <person name="Marimuthu A."/>
            <person name="Anand S."/>
            <person name="Sundaram H."/>
            <person name="Kingsbury R."/>
            <person name="Harsha H.C."/>
            <person name="Nair B."/>
            <person name="Prasad T.S."/>
            <person name="Chauhan D.S."/>
            <person name="Katoch K."/>
            <person name="Katoch V.M."/>
            <person name="Kumar P."/>
            <person name="Chaerkady R."/>
            <person name="Ramachandran S."/>
            <person name="Dash D."/>
            <person name="Pandey A."/>
        </authorList>
    </citation>
    <scope>IDENTIFICATION BY MASS SPECTROMETRY [LARGE SCALE ANALYSIS]</scope>
    <source>
        <strain>ATCC 25618 / H37Rv</strain>
    </source>
</reference>
<reference key="5">
    <citation type="journal article" date="2018" name="Molecules">
        <title>Arginine in the FARM and SARM: a role in chain-length determination for arginine in the aspartate-rich motifs of isoprenyl diphosphate synthases from Mycobacterium tuberculosis.</title>
        <authorList>
            <person name="Nagel R."/>
            <person name="Thomas J.A."/>
            <person name="Adekunle F.A."/>
            <person name="Mann F.M."/>
            <person name="Peters R.J."/>
        </authorList>
    </citation>
    <scope>FUNCTION</scope>
    <scope>CATALYTIC ACTIVITY</scope>
    <scope>DOMAIN</scope>
    <scope>MUTAGENESIS OF ARG-92 AND ARG-217</scope>
</reference>
<protein>
    <recommendedName>
        <fullName evidence="6">Dimethylallyltranstransferase</fullName>
        <ecNumber evidence="3 4">2.5.1.1</ecNumber>
    </recommendedName>
    <alternativeName>
        <fullName evidence="5">Geranyl diphosphate synthase</fullName>
        <shortName evidence="5">GPP synthase</shortName>
    </alternativeName>
</protein>
<proteinExistence type="evidence at protein level"/>
<sequence>MIPAVSLGDPQFTANVHDGIARITELINSELSQADEVMRDTVAHLVDAGGTPFRPLFTVLAAQLGSDPDGWEVTVAGAAIELMHLGTLCHDRVVDESDMSRKTPSDNTRWTNNFAILAGDYRFATASQLASRLDPEAFAVVAEAFAELITGQMRATRGPASHIDTIEHYLRVVHEKTGSLIAASGQLGAALSGAAEEQIRRVARLGRMIGAAFEISRDIIAISGDSATLSGADLGQAVHTLPMLYALREQTPDTSRLRELLAGPIHDDHVAEALTLLRCSPGIGKAKNVVAAYAAQAREELPYLPDRQPRRALATLIDHAISACD</sequence>
<accession>O05572</accession>
<accession>I6XWR7</accession>
<accession>L0T701</accession>